<accession>Q59Z14</accession>
<accession>A0A1D8PHU7</accession>
<proteinExistence type="inferred from homology"/>
<comment type="function">
    <text evidence="1">Catalyzes the hydroxylation of the N(6)-(4-aminobutyl)-L-lysine intermediate to form hypusine, an essential post-translational modification only found in mature eIF-5A factor.</text>
</comment>
<comment type="catalytic activity">
    <reaction evidence="1">
        <text>[eIF5A protein]-deoxyhypusine + AH2 + O2 = [eIF5A protein]-hypusine + A + H2O</text>
        <dbReference type="Rhea" id="RHEA:14101"/>
        <dbReference type="Rhea" id="RHEA-COMP:10144"/>
        <dbReference type="Rhea" id="RHEA-COMP:12592"/>
        <dbReference type="ChEBI" id="CHEBI:13193"/>
        <dbReference type="ChEBI" id="CHEBI:15377"/>
        <dbReference type="ChEBI" id="CHEBI:15379"/>
        <dbReference type="ChEBI" id="CHEBI:17499"/>
        <dbReference type="ChEBI" id="CHEBI:82657"/>
        <dbReference type="ChEBI" id="CHEBI:91175"/>
        <dbReference type="EC" id="1.14.99.29"/>
    </reaction>
</comment>
<comment type="cofactor">
    <cofactor evidence="1">
        <name>Fe(2+)</name>
        <dbReference type="ChEBI" id="CHEBI:29033"/>
    </cofactor>
    <text evidence="1">Binds 2 Fe(2+) ions per subunit.</text>
</comment>
<comment type="pathway">
    <text evidence="1">Protein modification; eIF5A hypusination.</text>
</comment>
<comment type="subcellular location">
    <subcellularLocation>
        <location evidence="1">Cytoplasm</location>
    </subcellularLocation>
    <subcellularLocation>
        <location evidence="1">Nucleus</location>
    </subcellularLocation>
</comment>
<comment type="similarity">
    <text evidence="1">Belongs to the deoxyhypusine hydroxylase family.</text>
</comment>
<dbReference type="EC" id="1.14.99.29" evidence="1"/>
<dbReference type="EMBL" id="CP017624">
    <property type="protein sequence ID" value="AOW27727.1"/>
    <property type="molecule type" value="Genomic_DNA"/>
</dbReference>
<dbReference type="RefSeq" id="XP_714875.1">
    <property type="nucleotide sequence ID" value="XM_709782.2"/>
</dbReference>
<dbReference type="SMR" id="Q59Z14"/>
<dbReference type="FunCoup" id="Q59Z14">
    <property type="interactions" value="942"/>
</dbReference>
<dbReference type="STRING" id="237561.Q59Z14"/>
<dbReference type="EnsemblFungi" id="C2_07290W_A-T">
    <property type="protein sequence ID" value="C2_07290W_A-T-p1"/>
    <property type="gene ID" value="C2_07290W_A"/>
</dbReference>
<dbReference type="GeneID" id="3643476"/>
<dbReference type="KEGG" id="cal:CAALFM_C207290WA"/>
<dbReference type="CGD" id="CAL0000183521">
    <property type="gene designation" value="orf19.9826"/>
</dbReference>
<dbReference type="VEuPathDB" id="FungiDB:C2_07290W_A"/>
<dbReference type="eggNOG" id="KOG0567">
    <property type="taxonomic scope" value="Eukaryota"/>
</dbReference>
<dbReference type="HOGENOM" id="CLU_053974_0_0_1"/>
<dbReference type="InParanoid" id="Q59Z14"/>
<dbReference type="OrthoDB" id="421002at2759"/>
<dbReference type="UniPathway" id="UPA00354"/>
<dbReference type="PRO" id="PR:Q59Z14"/>
<dbReference type="Proteomes" id="UP000000559">
    <property type="component" value="Chromosome 2"/>
</dbReference>
<dbReference type="GO" id="GO:0005737">
    <property type="term" value="C:cytoplasm"/>
    <property type="evidence" value="ECO:0007669"/>
    <property type="project" value="UniProtKB-SubCell"/>
</dbReference>
<dbReference type="GO" id="GO:0062040">
    <property type="term" value="C:fungal biofilm matrix"/>
    <property type="evidence" value="ECO:0000314"/>
    <property type="project" value="CGD"/>
</dbReference>
<dbReference type="GO" id="GO:0005634">
    <property type="term" value="C:nucleus"/>
    <property type="evidence" value="ECO:0007669"/>
    <property type="project" value="UniProtKB-SubCell"/>
</dbReference>
<dbReference type="GO" id="GO:0019135">
    <property type="term" value="F:deoxyhypusine monooxygenase activity"/>
    <property type="evidence" value="ECO:0000318"/>
    <property type="project" value="GO_Central"/>
</dbReference>
<dbReference type="GO" id="GO:0046872">
    <property type="term" value="F:metal ion binding"/>
    <property type="evidence" value="ECO:0007669"/>
    <property type="project" value="UniProtKB-KW"/>
</dbReference>
<dbReference type="GO" id="GO:0044182">
    <property type="term" value="P:filamentous growth of a population of unicellular organisms"/>
    <property type="evidence" value="ECO:0000315"/>
    <property type="project" value="CGD"/>
</dbReference>
<dbReference type="GO" id="GO:0036178">
    <property type="term" value="P:filamentous growth of a population of unicellular organisms in response to neutral pH"/>
    <property type="evidence" value="ECO:0000315"/>
    <property type="project" value="CGD"/>
</dbReference>
<dbReference type="GO" id="GO:0000226">
    <property type="term" value="P:microtubule cytoskeleton organization"/>
    <property type="evidence" value="ECO:0007669"/>
    <property type="project" value="EnsemblFungi"/>
</dbReference>
<dbReference type="GO" id="GO:0044011">
    <property type="term" value="P:single-species biofilm formation on inanimate substrate"/>
    <property type="evidence" value="ECO:0000315"/>
    <property type="project" value="CGD"/>
</dbReference>
<dbReference type="FunFam" id="1.25.10.10:FF:000099">
    <property type="entry name" value="Deoxyhypusine hydroxylase"/>
    <property type="match status" value="1"/>
</dbReference>
<dbReference type="FunFam" id="1.25.10.10:FF:000292">
    <property type="entry name" value="Deoxyhypusine hydroxylase"/>
    <property type="match status" value="1"/>
</dbReference>
<dbReference type="Gene3D" id="1.25.10.10">
    <property type="entry name" value="Leucine-rich Repeat Variant"/>
    <property type="match status" value="2"/>
</dbReference>
<dbReference type="HAMAP" id="MF_03101">
    <property type="entry name" value="Deoxyhypusine_hydroxylase"/>
    <property type="match status" value="1"/>
</dbReference>
<dbReference type="InterPro" id="IPR011989">
    <property type="entry name" value="ARM-like"/>
</dbReference>
<dbReference type="InterPro" id="IPR016024">
    <property type="entry name" value="ARM-type_fold"/>
</dbReference>
<dbReference type="InterPro" id="IPR027517">
    <property type="entry name" value="Deoxyhypusine_hydroxylase"/>
</dbReference>
<dbReference type="InterPro" id="IPR021133">
    <property type="entry name" value="HEAT_type_2"/>
</dbReference>
<dbReference type="InterPro" id="IPR004155">
    <property type="entry name" value="PBS_lyase_HEAT"/>
</dbReference>
<dbReference type="PANTHER" id="PTHR12697:SF5">
    <property type="entry name" value="DEOXYHYPUSINE HYDROXYLASE"/>
    <property type="match status" value="1"/>
</dbReference>
<dbReference type="PANTHER" id="PTHR12697">
    <property type="entry name" value="PBS LYASE HEAT-LIKE PROTEIN"/>
    <property type="match status" value="1"/>
</dbReference>
<dbReference type="Pfam" id="PF13646">
    <property type="entry name" value="HEAT_2"/>
    <property type="match status" value="2"/>
</dbReference>
<dbReference type="SMART" id="SM00567">
    <property type="entry name" value="EZ_HEAT"/>
    <property type="match status" value="5"/>
</dbReference>
<dbReference type="SUPFAM" id="SSF48371">
    <property type="entry name" value="ARM repeat"/>
    <property type="match status" value="1"/>
</dbReference>
<dbReference type="PROSITE" id="PS50077">
    <property type="entry name" value="HEAT_REPEAT"/>
    <property type="match status" value="1"/>
</dbReference>
<reference key="1">
    <citation type="journal article" date="2004" name="Proc. Natl. Acad. Sci. U.S.A.">
        <title>The diploid genome sequence of Candida albicans.</title>
        <authorList>
            <person name="Jones T."/>
            <person name="Federspiel N.A."/>
            <person name="Chibana H."/>
            <person name="Dungan J."/>
            <person name="Kalman S."/>
            <person name="Magee B.B."/>
            <person name="Newport G."/>
            <person name="Thorstenson Y.R."/>
            <person name="Agabian N."/>
            <person name="Magee P.T."/>
            <person name="Davis R.W."/>
            <person name="Scherer S."/>
        </authorList>
    </citation>
    <scope>NUCLEOTIDE SEQUENCE [LARGE SCALE GENOMIC DNA]</scope>
    <source>
        <strain>SC5314 / ATCC MYA-2876</strain>
    </source>
</reference>
<reference key="2">
    <citation type="journal article" date="2007" name="Genome Biol.">
        <title>Assembly of the Candida albicans genome into sixteen supercontigs aligned on the eight chromosomes.</title>
        <authorList>
            <person name="van het Hoog M."/>
            <person name="Rast T.J."/>
            <person name="Martchenko M."/>
            <person name="Grindle S."/>
            <person name="Dignard D."/>
            <person name="Hogues H."/>
            <person name="Cuomo C."/>
            <person name="Berriman M."/>
            <person name="Scherer S."/>
            <person name="Magee B.B."/>
            <person name="Whiteway M."/>
            <person name="Chibana H."/>
            <person name="Nantel A."/>
            <person name="Magee P.T."/>
        </authorList>
    </citation>
    <scope>GENOME REANNOTATION</scope>
    <source>
        <strain>SC5314 / ATCC MYA-2876</strain>
    </source>
</reference>
<reference key="3">
    <citation type="journal article" date="2013" name="Genome Biol.">
        <title>Assembly of a phased diploid Candida albicans genome facilitates allele-specific measurements and provides a simple model for repeat and indel structure.</title>
        <authorList>
            <person name="Muzzey D."/>
            <person name="Schwartz K."/>
            <person name="Weissman J.S."/>
            <person name="Sherlock G."/>
        </authorList>
    </citation>
    <scope>NUCLEOTIDE SEQUENCE [LARGE SCALE GENOMIC DNA]</scope>
    <scope>GENOME REANNOTATION</scope>
    <source>
        <strain>SC5314 / ATCC MYA-2876</strain>
    </source>
</reference>
<name>DOHH_CANAL</name>
<protein>
    <recommendedName>
        <fullName evidence="1">Deoxyhypusine hydroxylase</fullName>
        <shortName evidence="1">DOHH</shortName>
        <ecNumber evidence="1">1.14.99.29</ecNumber>
    </recommendedName>
    <alternativeName>
        <fullName evidence="1">Deoxyhypusine dioxygenase</fullName>
    </alternativeName>
    <alternativeName>
        <fullName evidence="1">Deoxyhypusine monooxygenase</fullName>
    </alternativeName>
</protein>
<keyword id="KW-0963">Cytoplasm</keyword>
<keyword id="KW-0386">Hypusine biosynthesis</keyword>
<keyword id="KW-0408">Iron</keyword>
<keyword id="KW-0479">Metal-binding</keyword>
<keyword id="KW-0503">Monooxygenase</keyword>
<keyword id="KW-0539">Nucleus</keyword>
<keyword id="KW-0560">Oxidoreductase</keyword>
<keyword id="KW-1185">Reference proteome</keyword>
<keyword id="KW-0677">Repeat</keyword>
<gene>
    <name evidence="1" type="primary">LIA1</name>
    <name type="ordered locus">CAALFM_C207290WA</name>
    <name type="ORF">CaO19.2286</name>
    <name type="ORF">CaO19.9826</name>
</gene>
<organism>
    <name type="scientific">Candida albicans (strain SC5314 / ATCC MYA-2876)</name>
    <name type="common">Yeast</name>
    <dbReference type="NCBI Taxonomy" id="237561"/>
    <lineage>
        <taxon>Eukaryota</taxon>
        <taxon>Fungi</taxon>
        <taxon>Dikarya</taxon>
        <taxon>Ascomycota</taxon>
        <taxon>Saccharomycotina</taxon>
        <taxon>Pichiomycetes</taxon>
        <taxon>Debaryomycetaceae</taxon>
        <taxon>Candida/Lodderomyces clade</taxon>
        <taxon>Candida</taxon>
    </lineage>
</organism>
<evidence type="ECO:0000255" key="1">
    <source>
        <dbReference type="HAMAP-Rule" id="MF_03101"/>
    </source>
</evidence>
<feature type="chain" id="PRO_0000283658" description="Deoxyhypusine hydroxylase">
    <location>
        <begin position="1"/>
        <end position="318"/>
    </location>
</feature>
<feature type="repeat" description="HEAT-like PBS-type 1">
    <location>
        <begin position="70"/>
        <end position="96"/>
    </location>
</feature>
<feature type="repeat" description="HEAT-like PBS-type 2">
    <location>
        <begin position="103"/>
        <end position="129"/>
    </location>
</feature>
<feature type="repeat" description="HEAT-like PBS-type 3">
    <location>
        <begin position="262"/>
        <end position="288"/>
    </location>
</feature>
<feature type="binding site" evidence="1">
    <location>
        <position position="72"/>
    </location>
    <ligand>
        <name>Fe cation</name>
        <dbReference type="ChEBI" id="CHEBI:24875"/>
        <label>1</label>
    </ligand>
</feature>
<feature type="binding site" evidence="1">
    <location>
        <position position="73"/>
    </location>
    <ligand>
        <name>Fe cation</name>
        <dbReference type="ChEBI" id="CHEBI:24875"/>
        <label>1</label>
    </ligand>
</feature>
<feature type="binding site" evidence="1">
    <location>
        <position position="105"/>
    </location>
    <ligand>
        <name>Fe cation</name>
        <dbReference type="ChEBI" id="CHEBI:24875"/>
        <label>1</label>
    </ligand>
</feature>
<feature type="binding site" evidence="1">
    <location>
        <position position="106"/>
    </location>
    <ligand>
        <name>Fe cation</name>
        <dbReference type="ChEBI" id="CHEBI:24875"/>
        <label>1</label>
    </ligand>
</feature>
<feature type="binding site" evidence="1">
    <location>
        <position position="231"/>
    </location>
    <ligand>
        <name>Fe cation</name>
        <dbReference type="ChEBI" id="CHEBI:24875"/>
        <label>2</label>
    </ligand>
</feature>
<feature type="binding site" evidence="1">
    <location>
        <position position="232"/>
    </location>
    <ligand>
        <name>Fe cation</name>
        <dbReference type="ChEBI" id="CHEBI:24875"/>
        <label>2</label>
    </ligand>
</feature>
<feature type="binding site" evidence="1">
    <location>
        <position position="264"/>
    </location>
    <ligand>
        <name>Fe cation</name>
        <dbReference type="ChEBI" id="CHEBI:24875"/>
        <label>2</label>
    </ligand>
</feature>
<feature type="binding site" evidence="1">
    <location>
        <position position="265"/>
    </location>
    <ligand>
        <name>Fe cation</name>
        <dbReference type="ChEBI" id="CHEBI:24875"/>
        <label>2</label>
    </ligand>
</feature>
<sequence>MSADEVNIDTASLEELRDILINKTGNTKLANRFRALFNLKSVGSEDSDKERAHKAIKYIAECFNDDSELLKHEVAYVLGQTKDLYAAPYLREVLENDNQQCMVRHEAAEALGALGDKESLPLLEKYFKEDPLLEIRQTCELAIERIHWENSEKAKNEVLEKSLYTSIDPAPPLATNDSTSKVEKLKEILNDQDKPLFERYRAMFRLRDIGTDEACLALASGFDDPSALFKHEIAYVFGQMCNPVTVPSLIKVLKDESEAGMVRHEAAEALGSIATDECLPVLQSFLNDSEPVVRDSAIVALDMYEYENSNELEYATVK</sequence>